<comment type="function">
    <text evidence="2">Alpha-galacturonidase able to catalyze the hydrolysis of the chromogenic substrate p-nitrophenyl-alpha-D-galacturonic acid (pNPalphaGalUA). It is probable that alpha-1,4-di-galacturonate (GalUA(2)) is the naturally occurring substrate.</text>
</comment>
<comment type="catalytic activity">
    <reaction evidence="2">
        <text>[(1-&gt;4)-alpha-D-galacturonosyl](n) + H2O = alpha-D-galacturonate + [(1-&gt;4)-alpha-D-galacturonosyl](n-1)</text>
        <dbReference type="Rhea" id="RHEA:14117"/>
        <dbReference type="Rhea" id="RHEA-COMP:14570"/>
        <dbReference type="Rhea" id="RHEA-COMP:14572"/>
        <dbReference type="ChEBI" id="CHEBI:15377"/>
        <dbReference type="ChEBI" id="CHEBI:58658"/>
        <dbReference type="ChEBI" id="CHEBI:140523"/>
        <dbReference type="EC" id="3.2.1.67"/>
    </reaction>
</comment>
<comment type="cofactor">
    <cofactor evidence="4">
        <name>NAD(+)</name>
        <dbReference type="ChEBI" id="CHEBI:57540"/>
    </cofactor>
</comment>
<comment type="cofactor">
    <cofactor evidence="4">
        <name>Mn(2+)</name>
        <dbReference type="ChEBI" id="CHEBI:29035"/>
    </cofactor>
    <text evidence="4">Binds 1 Mn(2+) ion per subunit.</text>
</comment>
<comment type="subunit">
    <text evidence="1">Homotetramer.</text>
</comment>
<comment type="similarity">
    <text evidence="3">Belongs to the glycosyl hydrolase 4 family.</text>
</comment>
<name>LPLD_THESW</name>
<reference key="1">
    <citation type="submission" date="2011-12" db="EMBL/GenBank/DDBJ databases">
        <title>Thermoanaerobacterium saccharolyticum JW/SL-YS485.</title>
        <authorList>
            <person name="Brown S.D."/>
            <person name="Land M.L."/>
            <person name="Herring C.D."/>
        </authorList>
    </citation>
    <scope>NUCLEOTIDE SEQUENCE [LARGE SCALE GENOMIC DNA]</scope>
    <source>
        <strain>DSM 8691 / JW/SL-YS485</strain>
    </source>
</reference>
<reference key="2">
    <citation type="journal article" date="2013" name="FEBS Lett.">
        <title>alpha-Galacturonidase(s): A new class of Family 4 glycoside hydrolases with strict specificity and a unique CHEV active site motif.</title>
        <authorList>
            <person name="Thompson J."/>
            <person name="Pikis A."/>
            <person name="Rich J."/>
            <person name="Hall B.G."/>
            <person name="Withers S.G."/>
        </authorList>
    </citation>
    <scope>FUNCTION</scope>
    <scope>CATALYTIC ACTIVITY</scope>
    <scope>COFACTOR</scope>
    <source>
        <strain>DSM 8691 / JW/SL-YS485</strain>
    </source>
</reference>
<feature type="chain" id="PRO_0000422163" description="Alpha-galacturonidase">
    <location>
        <begin position="1"/>
        <end position="465"/>
    </location>
</feature>
<feature type="active site" description="Proton donor" evidence="1">
    <location>
        <position position="180"/>
    </location>
</feature>
<feature type="binding site" evidence="1">
    <location>
        <begin position="11"/>
        <end position="78"/>
    </location>
    <ligand>
        <name>NAD(+)</name>
        <dbReference type="ChEBI" id="CHEBI:57540"/>
    </ligand>
</feature>
<feature type="binding site" evidence="1">
    <location>
        <position position="157"/>
    </location>
    <ligand>
        <name>substrate</name>
    </ligand>
</feature>
<feature type="binding site" evidence="1">
    <location>
        <position position="179"/>
    </location>
    <ligand>
        <name>Mn(2+)</name>
        <dbReference type="ChEBI" id="CHEBI:29035"/>
    </ligand>
</feature>
<feature type="binding site" evidence="1">
    <location>
        <position position="216"/>
    </location>
    <ligand>
        <name>Mn(2+)</name>
        <dbReference type="ChEBI" id="CHEBI:29035"/>
    </ligand>
</feature>
<protein>
    <recommendedName>
        <fullName>Alpha-galacturonidase</fullName>
        <ecNumber>3.2.1.67</ecNumber>
    </recommendedName>
</protein>
<keyword id="KW-0119">Carbohydrate metabolism</keyword>
<keyword id="KW-0326">Glycosidase</keyword>
<keyword id="KW-0378">Hydrolase</keyword>
<keyword id="KW-0464">Manganese</keyword>
<keyword id="KW-0479">Metal-binding</keyword>
<keyword id="KW-0520">NAD</keyword>
<evidence type="ECO:0000250" key="1"/>
<evidence type="ECO:0000269" key="2">
    <source>
    </source>
</evidence>
<evidence type="ECO:0000305" key="3"/>
<evidence type="ECO:0000305" key="4">
    <source>
    </source>
</evidence>
<proteinExistence type="evidence at protein level"/>
<organism>
    <name type="scientific">Thermoanaerobacterium saccharolyticum (strain DSM 8691 / JW/SL-YS485)</name>
    <dbReference type="NCBI Taxonomy" id="1094508"/>
    <lineage>
        <taxon>Bacteria</taxon>
        <taxon>Bacillati</taxon>
        <taxon>Bacillota</taxon>
        <taxon>Clostridia</taxon>
        <taxon>Thermoanaerobacterales</taxon>
        <taxon>Thermoanaerobacteraceae</taxon>
        <taxon>Thermoanaerobacterium</taxon>
    </lineage>
</organism>
<accession>I3VRU1</accession>
<sequence length="465" mass="52826">MRYTDGKVHDITIAYIGGGSRGWAWNLMTDLAKEESISGTVKLYDIDYDAAHDNEIIGNALSMRQDVKGKWLYKACETLEESLKGADFVIISILPGTFDEMESDVHAPEKYGIYQSVGDTVGPGGIVRALRTIPMFVDIANAIKEHCPDAWVINYTNPMTLCVRTLYEIFPQIKAFGCCHEVFGTQKLLSRALQDIEGIENVPREEIKINVLGINHFTWIDNARYKDIDLMYVYKQFVNKYYESGFVSDANNNWMNNSFVSAERVKFDLFLRYGVIAAAGDRHLAEFVPGYWYLKDPETVREWMFGLTTVSWRKEDLKRRLERSKRLKTGEEKFELKETGEEGVRQIKALLGLGDLVTNVNMPNHGQIEGIPYGAVVETNALFSGNKLKPVLSGKLPDNVNSLVLRQVYNQETTLKAALKRDFDLAFSAFVNDPLVTISLKDAKKLFKEMLENTKKYLDGWKIKA</sequence>
<dbReference type="EC" id="3.2.1.67"/>
<dbReference type="EMBL" id="CP003184">
    <property type="protein sequence ID" value="AFK85236.1"/>
    <property type="molecule type" value="Genomic_DNA"/>
</dbReference>
<dbReference type="RefSeq" id="WP_014757159.1">
    <property type="nucleotide sequence ID" value="NC_017992.1"/>
</dbReference>
<dbReference type="SMR" id="I3VRU1"/>
<dbReference type="STRING" id="1094508.Tsac_0200"/>
<dbReference type="CAZy" id="GH4">
    <property type="family name" value="Glycoside Hydrolase Family 4"/>
</dbReference>
<dbReference type="KEGG" id="tsh:Tsac_0200"/>
<dbReference type="PATRIC" id="fig|1094508.3.peg.200"/>
<dbReference type="eggNOG" id="COG1486">
    <property type="taxonomic scope" value="Bacteria"/>
</dbReference>
<dbReference type="BioCyc" id="TSAC1094508:GLMA-202-MONOMER"/>
<dbReference type="Proteomes" id="UP000006178">
    <property type="component" value="Chromosome"/>
</dbReference>
<dbReference type="GO" id="GO:0047911">
    <property type="term" value="F:galacturan 1,4-alpha-galacturonidase activity"/>
    <property type="evidence" value="ECO:0007669"/>
    <property type="project" value="UniProtKB-EC"/>
</dbReference>
<dbReference type="GO" id="GO:0046872">
    <property type="term" value="F:metal ion binding"/>
    <property type="evidence" value="ECO:0007669"/>
    <property type="project" value="UniProtKB-KW"/>
</dbReference>
<dbReference type="GO" id="GO:0016616">
    <property type="term" value="F:oxidoreductase activity, acting on the CH-OH group of donors, NAD or NADP as acceptor"/>
    <property type="evidence" value="ECO:0007669"/>
    <property type="project" value="InterPro"/>
</dbReference>
<dbReference type="GO" id="GO:0005975">
    <property type="term" value="P:carbohydrate metabolic process"/>
    <property type="evidence" value="ECO:0007669"/>
    <property type="project" value="InterPro"/>
</dbReference>
<dbReference type="Gene3D" id="3.90.1820.10">
    <property type="entry name" value="AglA-like glucosidase"/>
    <property type="match status" value="1"/>
</dbReference>
<dbReference type="InterPro" id="IPR053715">
    <property type="entry name" value="GH4_Enzyme_sf"/>
</dbReference>
<dbReference type="InterPro" id="IPR001088">
    <property type="entry name" value="Glyco_hydro_4"/>
</dbReference>
<dbReference type="InterPro" id="IPR022616">
    <property type="entry name" value="Glyco_hydro_4_C"/>
</dbReference>
<dbReference type="InterPro" id="IPR015955">
    <property type="entry name" value="Lactate_DH/Glyco_Ohase_4_C"/>
</dbReference>
<dbReference type="InterPro" id="IPR036291">
    <property type="entry name" value="NAD(P)-bd_dom_sf"/>
</dbReference>
<dbReference type="PANTHER" id="PTHR32092">
    <property type="entry name" value="6-PHOSPHO-BETA-GLUCOSIDASE-RELATED"/>
    <property type="match status" value="1"/>
</dbReference>
<dbReference type="PANTHER" id="PTHR32092:SF2">
    <property type="entry name" value="ALPHA-GALACTURONIDASE"/>
    <property type="match status" value="1"/>
</dbReference>
<dbReference type="Pfam" id="PF02056">
    <property type="entry name" value="Glyco_hydro_4"/>
    <property type="match status" value="1"/>
</dbReference>
<dbReference type="Pfam" id="PF11975">
    <property type="entry name" value="Glyco_hydro_4C"/>
    <property type="match status" value="1"/>
</dbReference>
<dbReference type="PRINTS" id="PR00732">
    <property type="entry name" value="GLHYDRLASE4"/>
</dbReference>
<dbReference type="SUPFAM" id="SSF56327">
    <property type="entry name" value="LDH C-terminal domain-like"/>
    <property type="match status" value="1"/>
</dbReference>
<dbReference type="SUPFAM" id="SSF51735">
    <property type="entry name" value="NAD(P)-binding Rossmann-fold domains"/>
    <property type="match status" value="1"/>
</dbReference>
<gene>
    <name type="ordered locus">Tsac_0200</name>
</gene>